<organism>
    <name type="scientific">Homo sapiens</name>
    <name type="common">Human</name>
    <dbReference type="NCBI Taxonomy" id="9606"/>
    <lineage>
        <taxon>Eukaryota</taxon>
        <taxon>Metazoa</taxon>
        <taxon>Chordata</taxon>
        <taxon>Craniata</taxon>
        <taxon>Vertebrata</taxon>
        <taxon>Euteleostomi</taxon>
        <taxon>Mammalia</taxon>
        <taxon>Eutheria</taxon>
        <taxon>Euarchontoglires</taxon>
        <taxon>Primates</taxon>
        <taxon>Haplorrhini</taxon>
        <taxon>Catarrhini</taxon>
        <taxon>Hominidae</taxon>
        <taxon>Homo</taxon>
    </lineage>
</organism>
<keyword id="KW-0002">3D-structure</keyword>
<keyword id="KW-0025">Alternative splicing</keyword>
<keyword id="KW-0106">Calcium</keyword>
<keyword id="KW-0965">Cell junction</keyword>
<keyword id="KW-1003">Cell membrane</keyword>
<keyword id="KW-0966">Cell projection</keyword>
<keyword id="KW-1015">Disulfide bond</keyword>
<keyword id="KW-0297">G-protein coupled receptor</keyword>
<keyword id="KW-0325">Glycoprotein</keyword>
<keyword id="KW-0430">Lectin</keyword>
<keyword id="KW-0472">Membrane</keyword>
<keyword id="KW-0479">Metal-binding</keyword>
<keyword id="KW-0597">Phosphoprotein</keyword>
<keyword id="KW-0628">Postsynaptic cell membrane</keyword>
<keyword id="KW-1267">Proteomics identification</keyword>
<keyword id="KW-0675">Receptor</keyword>
<keyword id="KW-1185">Reference proteome</keyword>
<keyword id="KW-0732">Signal</keyword>
<keyword id="KW-0770">Synapse</keyword>
<keyword id="KW-0807">Transducer</keyword>
<keyword id="KW-0812">Transmembrane</keyword>
<keyword id="KW-1133">Transmembrane helix</keyword>
<reference key="1">
    <citation type="submission" date="2000-09" db="EMBL/GenBank/DDBJ databases">
        <authorList>
            <person name="Douangpanya J."/>
            <person name="Puri K."/>
            <person name="Hayflick J."/>
        </authorList>
    </citation>
    <scope>NUCLEOTIDE SEQUENCE [MRNA] (ISOFORM 2)</scope>
</reference>
<reference key="2">
    <citation type="journal article" date="2005" name="Nature">
        <title>Generation and annotation of the DNA sequences of human chromosomes 2 and 4.</title>
        <authorList>
            <person name="Hillier L.W."/>
            <person name="Graves T.A."/>
            <person name="Fulton R.S."/>
            <person name="Fulton L.A."/>
            <person name="Pepin K.H."/>
            <person name="Minx P."/>
            <person name="Wagner-McPherson C."/>
            <person name="Layman D."/>
            <person name="Wylie K."/>
            <person name="Sekhon M."/>
            <person name="Becker M.C."/>
            <person name="Fewell G.A."/>
            <person name="Delehaunty K.D."/>
            <person name="Miner T.L."/>
            <person name="Nash W.E."/>
            <person name="Kremitzki C."/>
            <person name="Oddy L."/>
            <person name="Du H."/>
            <person name="Sun H."/>
            <person name="Bradshaw-Cordum H."/>
            <person name="Ali J."/>
            <person name="Carter J."/>
            <person name="Cordes M."/>
            <person name="Harris A."/>
            <person name="Isak A."/>
            <person name="van Brunt A."/>
            <person name="Nguyen C."/>
            <person name="Du F."/>
            <person name="Courtney L."/>
            <person name="Kalicki J."/>
            <person name="Ozersky P."/>
            <person name="Abbott S."/>
            <person name="Armstrong J."/>
            <person name="Belter E.A."/>
            <person name="Caruso L."/>
            <person name="Cedroni M."/>
            <person name="Cotton M."/>
            <person name="Davidson T."/>
            <person name="Desai A."/>
            <person name="Elliott G."/>
            <person name="Erb T."/>
            <person name="Fronick C."/>
            <person name="Gaige T."/>
            <person name="Haakenson W."/>
            <person name="Haglund K."/>
            <person name="Holmes A."/>
            <person name="Harkins R."/>
            <person name="Kim K."/>
            <person name="Kruchowski S.S."/>
            <person name="Strong C.M."/>
            <person name="Grewal N."/>
            <person name="Goyea E."/>
            <person name="Hou S."/>
            <person name="Levy A."/>
            <person name="Martinka S."/>
            <person name="Mead K."/>
            <person name="McLellan M.D."/>
            <person name="Meyer R."/>
            <person name="Randall-Maher J."/>
            <person name="Tomlinson C."/>
            <person name="Dauphin-Kohlberg S."/>
            <person name="Kozlowicz-Reilly A."/>
            <person name="Shah N."/>
            <person name="Swearengen-Shahid S."/>
            <person name="Snider J."/>
            <person name="Strong J.T."/>
            <person name="Thompson J."/>
            <person name="Yoakum M."/>
            <person name="Leonard S."/>
            <person name="Pearman C."/>
            <person name="Trani L."/>
            <person name="Radionenko M."/>
            <person name="Waligorski J.E."/>
            <person name="Wang C."/>
            <person name="Rock S.M."/>
            <person name="Tin-Wollam A.-M."/>
            <person name="Maupin R."/>
            <person name="Latreille P."/>
            <person name="Wendl M.C."/>
            <person name="Yang S.-P."/>
            <person name="Pohl C."/>
            <person name="Wallis J.W."/>
            <person name="Spieth J."/>
            <person name="Bieri T.A."/>
            <person name="Berkowicz N."/>
            <person name="Nelson J.O."/>
            <person name="Osborne J."/>
            <person name="Ding L."/>
            <person name="Meyer R."/>
            <person name="Sabo A."/>
            <person name="Shotland Y."/>
            <person name="Sinha P."/>
            <person name="Wohldmann P.E."/>
            <person name="Cook L.L."/>
            <person name="Hickenbotham M.T."/>
            <person name="Eldred J."/>
            <person name="Williams D."/>
            <person name="Jones T.A."/>
            <person name="She X."/>
            <person name="Ciccarelli F.D."/>
            <person name="Izaurralde E."/>
            <person name="Taylor J."/>
            <person name="Schmutz J."/>
            <person name="Myers R.M."/>
            <person name="Cox D.R."/>
            <person name="Huang X."/>
            <person name="McPherson J.D."/>
            <person name="Mardis E.R."/>
            <person name="Clifton S.W."/>
            <person name="Warren W.C."/>
            <person name="Chinwalla A.T."/>
            <person name="Eddy S.R."/>
            <person name="Marra M.A."/>
            <person name="Ovcharenko I."/>
            <person name="Furey T.S."/>
            <person name="Miller W."/>
            <person name="Eichler E.E."/>
            <person name="Bork P."/>
            <person name="Suyama M."/>
            <person name="Torrents D."/>
            <person name="Waterston R.H."/>
            <person name="Wilson R.K."/>
        </authorList>
    </citation>
    <scope>NUCLEOTIDE SEQUENCE [LARGE SCALE GENOMIC DNA]</scope>
</reference>
<reference key="3">
    <citation type="journal article" date="2004" name="Nat. Genet.">
        <title>Complete sequencing and characterization of 21,243 full-length human cDNAs.</title>
        <authorList>
            <person name="Ota T."/>
            <person name="Suzuki Y."/>
            <person name="Nishikawa T."/>
            <person name="Otsuki T."/>
            <person name="Sugiyama T."/>
            <person name="Irie R."/>
            <person name="Wakamatsu A."/>
            <person name="Hayashi K."/>
            <person name="Sato H."/>
            <person name="Nagai K."/>
            <person name="Kimura K."/>
            <person name="Makita H."/>
            <person name="Sekine M."/>
            <person name="Obayashi M."/>
            <person name="Nishi T."/>
            <person name="Shibahara T."/>
            <person name="Tanaka T."/>
            <person name="Ishii S."/>
            <person name="Yamamoto J."/>
            <person name="Saito K."/>
            <person name="Kawai Y."/>
            <person name="Isono Y."/>
            <person name="Nakamura Y."/>
            <person name="Nagahari K."/>
            <person name="Murakami K."/>
            <person name="Yasuda T."/>
            <person name="Iwayanagi T."/>
            <person name="Wagatsuma M."/>
            <person name="Shiratori A."/>
            <person name="Sudo H."/>
            <person name="Hosoiri T."/>
            <person name="Kaku Y."/>
            <person name="Kodaira H."/>
            <person name="Kondo H."/>
            <person name="Sugawara M."/>
            <person name="Takahashi M."/>
            <person name="Kanda K."/>
            <person name="Yokoi T."/>
            <person name="Furuya T."/>
            <person name="Kikkawa E."/>
            <person name="Omura Y."/>
            <person name="Abe K."/>
            <person name="Kamihara K."/>
            <person name="Katsuta N."/>
            <person name="Sato K."/>
            <person name="Tanikawa M."/>
            <person name="Yamazaki M."/>
            <person name="Ninomiya K."/>
            <person name="Ishibashi T."/>
            <person name="Yamashita H."/>
            <person name="Murakawa K."/>
            <person name="Fujimori K."/>
            <person name="Tanai H."/>
            <person name="Kimata M."/>
            <person name="Watanabe M."/>
            <person name="Hiraoka S."/>
            <person name="Chiba Y."/>
            <person name="Ishida S."/>
            <person name="Ono Y."/>
            <person name="Takiguchi S."/>
            <person name="Watanabe S."/>
            <person name="Yosida M."/>
            <person name="Hotuta T."/>
            <person name="Kusano J."/>
            <person name="Kanehori K."/>
            <person name="Takahashi-Fujii A."/>
            <person name="Hara H."/>
            <person name="Tanase T.-O."/>
            <person name="Nomura Y."/>
            <person name="Togiya S."/>
            <person name="Komai F."/>
            <person name="Hara R."/>
            <person name="Takeuchi K."/>
            <person name="Arita M."/>
            <person name="Imose N."/>
            <person name="Musashino K."/>
            <person name="Yuuki H."/>
            <person name="Oshima A."/>
            <person name="Sasaki N."/>
            <person name="Aotsuka S."/>
            <person name="Yoshikawa Y."/>
            <person name="Matsunawa H."/>
            <person name="Ichihara T."/>
            <person name="Shiohata N."/>
            <person name="Sano S."/>
            <person name="Moriya S."/>
            <person name="Momiyama H."/>
            <person name="Satoh N."/>
            <person name="Takami S."/>
            <person name="Terashima Y."/>
            <person name="Suzuki O."/>
            <person name="Nakagawa S."/>
            <person name="Senoh A."/>
            <person name="Mizoguchi H."/>
            <person name="Goto Y."/>
            <person name="Shimizu F."/>
            <person name="Wakebe H."/>
            <person name="Hishigaki H."/>
            <person name="Watanabe T."/>
            <person name="Sugiyama A."/>
            <person name="Takemoto M."/>
            <person name="Kawakami B."/>
            <person name="Yamazaki M."/>
            <person name="Watanabe K."/>
            <person name="Kumagai A."/>
            <person name="Itakura S."/>
            <person name="Fukuzumi Y."/>
            <person name="Fujimori Y."/>
            <person name="Komiyama M."/>
            <person name="Tashiro H."/>
            <person name="Tanigami A."/>
            <person name="Fujiwara T."/>
            <person name="Ono T."/>
            <person name="Yamada K."/>
            <person name="Fujii Y."/>
            <person name="Ozaki K."/>
            <person name="Hirao M."/>
            <person name="Ohmori Y."/>
            <person name="Kawabata A."/>
            <person name="Hikiji T."/>
            <person name="Kobatake N."/>
            <person name="Inagaki H."/>
            <person name="Ikema Y."/>
            <person name="Okamoto S."/>
            <person name="Okitani R."/>
            <person name="Kawakami T."/>
            <person name="Noguchi S."/>
            <person name="Itoh T."/>
            <person name="Shigeta K."/>
            <person name="Senba T."/>
            <person name="Matsumura K."/>
            <person name="Nakajima Y."/>
            <person name="Mizuno T."/>
            <person name="Morinaga M."/>
            <person name="Sasaki M."/>
            <person name="Togashi T."/>
            <person name="Oyama M."/>
            <person name="Hata H."/>
            <person name="Watanabe M."/>
            <person name="Komatsu T."/>
            <person name="Mizushima-Sugano J."/>
            <person name="Satoh T."/>
            <person name="Shirai Y."/>
            <person name="Takahashi Y."/>
            <person name="Nakagawa K."/>
            <person name="Okumura K."/>
            <person name="Nagase T."/>
            <person name="Nomura N."/>
            <person name="Kikuchi H."/>
            <person name="Masuho Y."/>
            <person name="Yamashita R."/>
            <person name="Nakai K."/>
            <person name="Yada T."/>
            <person name="Nakamura Y."/>
            <person name="Ohara O."/>
            <person name="Isogai T."/>
            <person name="Sugano S."/>
        </authorList>
    </citation>
    <scope>NUCLEOTIDE SEQUENCE [LARGE SCALE MRNA] OF 279-707 (ISOFORM 3)</scope>
    <source>
        <tissue>Colon</tissue>
    </source>
</reference>
<reference key="4">
    <citation type="journal article" date="1998" name="DNA Res.">
        <title>Prediction of the coding sequences of unidentified human genes. XI. The complete sequences of 100 new cDNA clones from brain which code for large proteins in vitro.</title>
        <authorList>
            <person name="Nagase T."/>
            <person name="Ishikawa K."/>
            <person name="Suyama M."/>
            <person name="Kikuno R."/>
            <person name="Miyajima N."/>
            <person name="Tanaka A."/>
            <person name="Kotani H."/>
            <person name="Nomura N."/>
            <person name="Ohara O."/>
        </authorList>
    </citation>
    <scope>NUCLEOTIDE SEQUENCE [LARGE SCALE MRNA] OF 576-1447 (ISOFORM 1)</scope>
    <source>
        <tissue>Brain</tissue>
    </source>
</reference>
<reference key="5">
    <citation type="journal article" date="2015" name="Structure">
        <title>Structural basis of latrophilin-FLRT-UNC5 interaction in cell adhesion.</title>
        <authorList>
            <person name="Lu Y.C."/>
            <person name="Nazarko O.V."/>
            <person name="Sando R. III"/>
            <person name="Salzman G.S."/>
            <person name="Suedhof T.C."/>
            <person name="Arac D."/>
        </authorList>
    </citation>
    <scope>X-RAY CRYSTALLOGRAPHY (3.60 ANGSTROMS) OF 132-392 IN COMPLEX WITH FLRT3 AND CALCIUM IONS</scope>
    <scope>INTERACTION WITH FLRT3</scope>
    <scope>IDENTIFICATION IN COMPLEXES WITH FLTR3; UNC5B AND UNC5D</scope>
    <scope>DISULFIDE BOND</scope>
    <scope>FUNCTION</scope>
    <scope>SUBCELLULAR LOCATION</scope>
    <scope>MUTAGENESIS OF 249-TYR--THR-252 AND ARG-308</scope>
    <scope>REGION</scope>
</reference>
<reference evidence="17" key="6">
    <citation type="journal article" date="2022" name="Nature">
        <title>The tethered peptide activation mechanism of adhesion GPCRs.</title>
        <authorList>
            <person name="Barros-Alvarez X."/>
            <person name="Nwokonko R.M."/>
            <person name="Vizurraga A."/>
            <person name="Matzov D."/>
            <person name="He F."/>
            <person name="Papasergi-Scott M.M."/>
            <person name="Robertson M.J."/>
            <person name="Panova O."/>
            <person name="Yardeni E.H."/>
            <person name="Seven A.B."/>
            <person name="Kwarcinski F.E."/>
            <person name="Su H."/>
            <person name="Peroto M.C."/>
            <person name="Meyerowitz J.G."/>
            <person name="Shalev-Benami M."/>
            <person name="Tall G.G."/>
            <person name="Skiniotis G."/>
        </authorList>
    </citation>
    <scope>STRUCTURE BY ELECTRON MICROSCOPY (2.90 ANGSTROMS) OF 842-1138 IN COMPLEX WITH GNA13; GNB1 AND GNG2</scope>
    <scope>FUNCTION</scope>
    <scope>ACTIVITY REGULATION</scope>
    <scope>DOMAIN</scope>
    <scope>DISULFIDE BONDS</scope>
    <scope>MUTAGENESIS OF PHE-844; LEU-847; PHE-914; PHE-938; TRP-1000 AND TRP-1068</scope>
</reference>
<reference key="7">
    <citation type="journal article" date="2011" name="Am. J. Med. Genet. B Neuropsychiatr. Genet.">
        <title>Screening of human LPHN3 for variants with a potential impact on ADHD susceptibility.</title>
        <authorList>
            <person name="Domene S."/>
            <person name="Stanescu H."/>
            <person name="Wallis D."/>
            <person name="Tinloy B."/>
            <person name="Pineda D.E."/>
            <person name="Kleta R."/>
            <person name="Arcos-Burgos M."/>
            <person name="Roessler E."/>
            <person name="Muenke M."/>
        </authorList>
    </citation>
    <scope>VARIANTS SER-247; GLN-465; MET-770 AND VAL-915</scope>
</reference>
<dbReference type="EMBL" id="AF307080">
    <property type="protein sequence ID" value="AAG27462.1"/>
    <property type="molecule type" value="mRNA"/>
</dbReference>
<dbReference type="EMBL" id="AK000781">
    <property type="protein sequence ID" value="BAA91375.1"/>
    <property type="status" value="ALT_INIT"/>
    <property type="molecule type" value="mRNA"/>
</dbReference>
<dbReference type="EMBL" id="AC007511">
    <property type="status" value="NOT_ANNOTATED_CDS"/>
    <property type="molecule type" value="Genomic_DNA"/>
</dbReference>
<dbReference type="EMBL" id="AC020741">
    <property type="status" value="NOT_ANNOTATED_CDS"/>
    <property type="molecule type" value="Genomic_DNA"/>
</dbReference>
<dbReference type="EMBL" id="AC092643">
    <property type="status" value="NOT_ANNOTATED_CDS"/>
    <property type="molecule type" value="Genomic_DNA"/>
</dbReference>
<dbReference type="EMBL" id="AC092663">
    <property type="status" value="NOT_ANNOTATED_CDS"/>
    <property type="molecule type" value="Genomic_DNA"/>
</dbReference>
<dbReference type="EMBL" id="AC092668">
    <property type="status" value="NOT_ANNOTATED_CDS"/>
    <property type="molecule type" value="Genomic_DNA"/>
</dbReference>
<dbReference type="EMBL" id="AC096723">
    <property type="status" value="NOT_ANNOTATED_CDS"/>
    <property type="molecule type" value="Genomic_DNA"/>
</dbReference>
<dbReference type="EMBL" id="AC104813">
    <property type="status" value="NOT_ANNOTATED_CDS"/>
    <property type="molecule type" value="Genomic_DNA"/>
</dbReference>
<dbReference type="EMBL" id="AC108161">
    <property type="status" value="NOT_ANNOTATED_CDS"/>
    <property type="molecule type" value="Genomic_DNA"/>
</dbReference>
<dbReference type="EMBL" id="AB018311">
    <property type="protein sequence ID" value="BAA34488.1"/>
    <property type="molecule type" value="mRNA"/>
</dbReference>
<dbReference type="CCDS" id="CCDS54768.1">
    <molecule id="Q9HAR2-4"/>
</dbReference>
<dbReference type="CCDS" id="CCDS82926.1">
    <molecule id="Q9HAR2-2"/>
</dbReference>
<dbReference type="RefSeq" id="NP_001309175.1">
    <molecule id="Q9HAR2-2"/>
    <property type="nucleotide sequence ID" value="NM_001322246.3"/>
</dbReference>
<dbReference type="RefSeq" id="NP_001309331.1">
    <property type="nucleotide sequence ID" value="NM_001322402.1"/>
</dbReference>
<dbReference type="RefSeq" id="NP_001374458.1">
    <molecule id="Q9HAR2-4"/>
    <property type="nucleotide sequence ID" value="NM_001387529.1"/>
</dbReference>
<dbReference type="RefSeq" id="NP_001374466.1">
    <molecule id="Q9HAR2-1"/>
    <property type="nucleotide sequence ID" value="NM_001387537.1"/>
</dbReference>
<dbReference type="RefSeq" id="NP_001374467.1">
    <molecule id="Q9HAR2-1"/>
    <property type="nucleotide sequence ID" value="NM_001387538.1"/>
</dbReference>
<dbReference type="RefSeq" id="NP_001374468.1">
    <molecule id="Q9HAR2-1"/>
    <property type="nucleotide sequence ID" value="NM_001387539.1"/>
</dbReference>
<dbReference type="RefSeq" id="NP_001374476.1">
    <molecule id="Q9HAR2-2"/>
    <property type="nucleotide sequence ID" value="NM_001387547.1"/>
</dbReference>
<dbReference type="RefSeq" id="NP_056051.2">
    <molecule id="Q9HAR2-4"/>
    <property type="nucleotide sequence ID" value="NM_015236.7"/>
</dbReference>
<dbReference type="PDB" id="5CMN">
    <property type="method" value="X-ray"/>
    <property type="resolution" value="3.60 A"/>
    <property type="chains" value="E/F/G/H=132-392"/>
</dbReference>
<dbReference type="PDB" id="6VHH">
    <property type="method" value="EM"/>
    <property type="resolution" value="2.97 A"/>
    <property type="chains" value="B=21-866"/>
</dbReference>
<dbReference type="PDB" id="7SF7">
    <property type="method" value="EM"/>
    <property type="resolution" value="2.90 A"/>
    <property type="chains" value="A=842-1138"/>
</dbReference>
<dbReference type="PDB" id="8DJG">
    <property type="method" value="X-ray"/>
    <property type="resolution" value="2.65 A"/>
    <property type="chains" value="E/F=24-126"/>
</dbReference>
<dbReference type="PDBsum" id="5CMN"/>
<dbReference type="PDBsum" id="6VHH"/>
<dbReference type="PDBsum" id="7SF7"/>
<dbReference type="PDBsum" id="8DJG"/>
<dbReference type="EMDB" id="EMD-21205"/>
<dbReference type="EMDB" id="EMD-43523"/>
<dbReference type="SMR" id="Q9HAR2"/>
<dbReference type="BioGRID" id="116882">
    <property type="interactions" value="24"/>
</dbReference>
<dbReference type="CORUM" id="Q9HAR2"/>
<dbReference type="DIP" id="DIP-56228N"/>
<dbReference type="FunCoup" id="Q9HAR2">
    <property type="interactions" value="1094"/>
</dbReference>
<dbReference type="IntAct" id="Q9HAR2">
    <property type="interactions" value="27"/>
</dbReference>
<dbReference type="STRING" id="9606.ENSP00000422533"/>
<dbReference type="MEROPS" id="P02.011"/>
<dbReference type="TCDB" id="9.A.14.6.8">
    <property type="family name" value="the g-protein-coupled receptor (gpcr) family"/>
</dbReference>
<dbReference type="UniLectin" id="Q9HAR2"/>
<dbReference type="GlyCosmos" id="Q9HAR2">
    <property type="glycosylation" value="11 sites, 2 glycans"/>
</dbReference>
<dbReference type="GlyGen" id="Q9HAR2">
    <property type="glycosylation" value="14 sites, 4 N-linked glycans (2 sites), 4 O-linked glycans (6 sites)"/>
</dbReference>
<dbReference type="iPTMnet" id="Q9HAR2"/>
<dbReference type="PhosphoSitePlus" id="Q9HAR2"/>
<dbReference type="SwissPalm" id="Q9HAR2"/>
<dbReference type="BioMuta" id="ADGRL3"/>
<dbReference type="DMDM" id="47116772"/>
<dbReference type="jPOST" id="Q9HAR2"/>
<dbReference type="MassIVE" id="Q9HAR2"/>
<dbReference type="PaxDb" id="9606-ENSP00000422533"/>
<dbReference type="PeptideAtlas" id="Q9HAR2"/>
<dbReference type="ProteomicsDB" id="19784"/>
<dbReference type="ProteomicsDB" id="81420">
    <molecule id="Q9HAR2-1"/>
</dbReference>
<dbReference type="ProteomicsDB" id="81421">
    <molecule id="Q9HAR2-2"/>
</dbReference>
<dbReference type="ProteomicsDB" id="81422">
    <molecule id="Q9HAR2-3"/>
</dbReference>
<dbReference type="Pumba" id="Q9HAR2"/>
<dbReference type="Antibodypedia" id="2755">
    <property type="antibodies" value="171 antibodies from 30 providers"/>
</dbReference>
<dbReference type="DNASU" id="23284"/>
<dbReference type="Ensembl" id="ENST00000512091.6">
    <molecule id="Q9HAR2-2"/>
    <property type="protein sequence ID" value="ENSP00000423388.1"/>
    <property type="gene ID" value="ENSG00000150471.17"/>
</dbReference>
<dbReference type="Ensembl" id="ENST00000514591.5">
    <molecule id="Q9HAR2-4"/>
    <property type="protein sequence ID" value="ENSP00000422533.1"/>
    <property type="gene ID" value="ENSG00000150471.17"/>
</dbReference>
<dbReference type="GeneID" id="23284"/>
<dbReference type="KEGG" id="hsa:23284"/>
<dbReference type="UCSC" id="uc003hcq.5">
    <molecule id="Q9HAR2-1"/>
    <property type="organism name" value="human"/>
</dbReference>
<dbReference type="AGR" id="HGNC:20974"/>
<dbReference type="CTD" id="23284"/>
<dbReference type="DisGeNET" id="23284"/>
<dbReference type="GeneCards" id="ADGRL3"/>
<dbReference type="HGNC" id="HGNC:20974">
    <property type="gene designation" value="ADGRL3"/>
</dbReference>
<dbReference type="HPA" id="ENSG00000150471">
    <property type="expression patterns" value="Tissue enhanced (brain)"/>
</dbReference>
<dbReference type="MIM" id="616417">
    <property type="type" value="gene"/>
</dbReference>
<dbReference type="neXtProt" id="NX_Q9HAR2"/>
<dbReference type="OpenTargets" id="ENSG00000150471"/>
<dbReference type="PharmGKB" id="PA134968284"/>
<dbReference type="VEuPathDB" id="HostDB:ENSG00000150471"/>
<dbReference type="eggNOG" id="KOG3545">
    <property type="taxonomic scope" value="Eukaryota"/>
</dbReference>
<dbReference type="eggNOG" id="KOG4193">
    <property type="taxonomic scope" value="Eukaryota"/>
</dbReference>
<dbReference type="eggNOG" id="KOG4729">
    <property type="taxonomic scope" value="Eukaryota"/>
</dbReference>
<dbReference type="GeneTree" id="ENSGT00940000155527"/>
<dbReference type="HOGENOM" id="CLU_002753_0_1_1"/>
<dbReference type="InParanoid" id="Q9HAR2"/>
<dbReference type="OrthoDB" id="1100386at2759"/>
<dbReference type="PAN-GO" id="Q9HAR2">
    <property type="GO annotations" value="9 GO annotations based on evolutionary models"/>
</dbReference>
<dbReference type="PhylomeDB" id="Q9HAR2"/>
<dbReference type="TreeFam" id="TF351999"/>
<dbReference type="PathwayCommons" id="Q9HAR2"/>
<dbReference type="SignaLink" id="Q9HAR2"/>
<dbReference type="BioGRID-ORCS" id="23284">
    <property type="hits" value="2 hits in 1146 CRISPR screens"/>
</dbReference>
<dbReference type="CD-CODE" id="FB4E32DD">
    <property type="entry name" value="Presynaptic clusters and postsynaptic densities"/>
</dbReference>
<dbReference type="ChiTaRS" id="ADGRL3">
    <property type="organism name" value="human"/>
</dbReference>
<dbReference type="EvolutionaryTrace" id="Q9HAR2"/>
<dbReference type="GenomeRNAi" id="23284"/>
<dbReference type="Pharos" id="Q9HAR2">
    <property type="development level" value="Tbio"/>
</dbReference>
<dbReference type="PRO" id="PR:Q9HAR2"/>
<dbReference type="Proteomes" id="UP000005640">
    <property type="component" value="Chromosome 4"/>
</dbReference>
<dbReference type="RNAct" id="Q9HAR2">
    <property type="molecule type" value="protein"/>
</dbReference>
<dbReference type="Bgee" id="ENSG00000150471">
    <property type="expression patterns" value="Expressed in adrenal tissue and 180 other cell types or tissues"/>
</dbReference>
<dbReference type="ExpressionAtlas" id="Q9HAR2">
    <property type="expression patterns" value="baseline and differential"/>
</dbReference>
<dbReference type="GO" id="GO:0030424">
    <property type="term" value="C:axon"/>
    <property type="evidence" value="ECO:0000250"/>
    <property type="project" value="UniProtKB"/>
</dbReference>
<dbReference type="GO" id="GO:0005911">
    <property type="term" value="C:cell-cell junction"/>
    <property type="evidence" value="ECO:0000250"/>
    <property type="project" value="UniProtKB"/>
</dbReference>
<dbReference type="GO" id="GO:0098978">
    <property type="term" value="C:glutamatergic synapse"/>
    <property type="evidence" value="ECO:0000318"/>
    <property type="project" value="GO_Central"/>
</dbReference>
<dbReference type="GO" id="GO:0016020">
    <property type="term" value="C:membrane"/>
    <property type="evidence" value="ECO:0000304"/>
    <property type="project" value="GDB"/>
</dbReference>
<dbReference type="GO" id="GO:0005886">
    <property type="term" value="C:plasma membrane"/>
    <property type="evidence" value="ECO:0000314"/>
    <property type="project" value="UniProtKB"/>
</dbReference>
<dbReference type="GO" id="GO:0005509">
    <property type="term" value="F:calcium ion binding"/>
    <property type="evidence" value="ECO:0000314"/>
    <property type="project" value="UniProtKB"/>
</dbReference>
<dbReference type="GO" id="GO:0030246">
    <property type="term" value="F:carbohydrate binding"/>
    <property type="evidence" value="ECO:0007669"/>
    <property type="project" value="UniProtKB-KW"/>
</dbReference>
<dbReference type="GO" id="GO:0098631">
    <property type="term" value="F:cell adhesion mediator activity"/>
    <property type="evidence" value="ECO:0000250"/>
    <property type="project" value="UniProtKB"/>
</dbReference>
<dbReference type="GO" id="GO:0004930">
    <property type="term" value="F:G protein-coupled receptor activity"/>
    <property type="evidence" value="ECO:0000314"/>
    <property type="project" value="UniProtKB"/>
</dbReference>
<dbReference type="GO" id="GO:0140693">
    <property type="term" value="F:molecular condensate scaffold activity"/>
    <property type="evidence" value="ECO:0000250"/>
    <property type="project" value="UniProtKB"/>
</dbReference>
<dbReference type="GO" id="GO:0007189">
    <property type="term" value="P:adenylate cyclase-activating G protein-coupled receptor signaling pathway"/>
    <property type="evidence" value="ECO:0000250"/>
    <property type="project" value="UniProtKB"/>
</dbReference>
<dbReference type="GO" id="GO:0007166">
    <property type="term" value="P:cell surface receptor signaling pathway"/>
    <property type="evidence" value="ECO:0007669"/>
    <property type="project" value="InterPro"/>
</dbReference>
<dbReference type="GO" id="GO:0098742">
    <property type="term" value="P:cell-cell adhesion via plasma-membrane adhesion molecules"/>
    <property type="evidence" value="ECO:0000314"/>
    <property type="project" value="UniProtKB"/>
</dbReference>
<dbReference type="GO" id="GO:1904861">
    <property type="term" value="P:excitatory synapse assembly"/>
    <property type="evidence" value="ECO:0000250"/>
    <property type="project" value="UniProtKB"/>
</dbReference>
<dbReference type="GO" id="GO:0007186">
    <property type="term" value="P:G protein-coupled receptor signaling pathway"/>
    <property type="evidence" value="ECO:0000304"/>
    <property type="project" value="GDB"/>
</dbReference>
<dbReference type="GO" id="GO:0001764">
    <property type="term" value="P:neuron migration"/>
    <property type="evidence" value="ECO:0000250"/>
    <property type="project" value="UniProtKB"/>
</dbReference>
<dbReference type="GO" id="GO:0160221">
    <property type="term" value="P:Rho-activating G protein-coupled receptor signaling pathway"/>
    <property type="evidence" value="ECO:0000314"/>
    <property type="project" value="UniProtKB"/>
</dbReference>
<dbReference type="GO" id="GO:0007416">
    <property type="term" value="P:synapse assembly"/>
    <property type="evidence" value="ECO:0000250"/>
    <property type="project" value="UniProtKB"/>
</dbReference>
<dbReference type="CDD" id="cd16005">
    <property type="entry name" value="7tmB2_Latrophilin-3"/>
    <property type="match status" value="1"/>
</dbReference>
<dbReference type="CDD" id="cd22846">
    <property type="entry name" value="Gal_Rha_Lectin_LPHN3"/>
    <property type="match status" value="1"/>
</dbReference>
<dbReference type="FunFam" id="1.20.1070.10:FF:000011">
    <property type="entry name" value="Adhesion G protein-coupled receptor L2"/>
    <property type="match status" value="1"/>
</dbReference>
<dbReference type="FunFam" id="2.60.120.740:FF:000001">
    <property type="entry name" value="Adhesion G protein-coupled receptor L2"/>
    <property type="match status" value="1"/>
</dbReference>
<dbReference type="FunFam" id="2.60.220.50:FF:000001">
    <property type="entry name" value="Adhesion G protein-coupled receptor L2"/>
    <property type="match status" value="1"/>
</dbReference>
<dbReference type="FunFam" id="4.10.1240.10:FF:000004">
    <property type="entry name" value="Adhesion G protein-coupled receptor L3"/>
    <property type="match status" value="1"/>
</dbReference>
<dbReference type="FunFam" id="1.25.40.610:FF:000003">
    <property type="entry name" value="adhesion G protein-coupled receptor L3"/>
    <property type="match status" value="1"/>
</dbReference>
<dbReference type="Gene3D" id="1.25.40.610">
    <property type="match status" value="1"/>
</dbReference>
<dbReference type="Gene3D" id="2.60.120.740">
    <property type="match status" value="1"/>
</dbReference>
<dbReference type="Gene3D" id="2.60.220.50">
    <property type="match status" value="1"/>
</dbReference>
<dbReference type="Gene3D" id="4.10.1240.10">
    <property type="entry name" value="GPCR, family 2, extracellular hormone receptor domain"/>
    <property type="match status" value="1"/>
</dbReference>
<dbReference type="Gene3D" id="1.20.1070.10">
    <property type="entry name" value="Rhodopsin 7-helix transmembrane proteins"/>
    <property type="match status" value="1"/>
</dbReference>
<dbReference type="InterPro" id="IPR057244">
    <property type="entry name" value="GAIN_B"/>
</dbReference>
<dbReference type="InterPro" id="IPR032471">
    <property type="entry name" value="GAIN_dom_N"/>
</dbReference>
<dbReference type="InterPro" id="IPR046338">
    <property type="entry name" value="GAIN_dom_sf"/>
</dbReference>
<dbReference type="InterPro" id="IPR017981">
    <property type="entry name" value="GPCR_2-like_7TM"/>
</dbReference>
<dbReference type="InterPro" id="IPR036445">
    <property type="entry name" value="GPCR_2_extracell_dom_sf"/>
</dbReference>
<dbReference type="InterPro" id="IPR001879">
    <property type="entry name" value="GPCR_2_extracellular_dom"/>
</dbReference>
<dbReference type="InterPro" id="IPR003924">
    <property type="entry name" value="GPCR_2_latrophilin"/>
</dbReference>
<dbReference type="InterPro" id="IPR003334">
    <property type="entry name" value="GPCR_2_latrophilin_rcpt_C"/>
</dbReference>
<dbReference type="InterPro" id="IPR000832">
    <property type="entry name" value="GPCR_2_secretin-like"/>
</dbReference>
<dbReference type="InterPro" id="IPR017983">
    <property type="entry name" value="GPCR_2_secretin-like_CS"/>
</dbReference>
<dbReference type="InterPro" id="IPR000203">
    <property type="entry name" value="GPS"/>
</dbReference>
<dbReference type="InterPro" id="IPR000922">
    <property type="entry name" value="Lectin_gal-bd_dom"/>
</dbReference>
<dbReference type="InterPro" id="IPR043159">
    <property type="entry name" value="Lectin_gal-bd_sf"/>
</dbReference>
<dbReference type="InterPro" id="IPR003112">
    <property type="entry name" value="Olfac-like_dom"/>
</dbReference>
<dbReference type="PANTHER" id="PTHR12011:SF60">
    <property type="entry name" value="ADHESION G PROTEIN-COUPLED RECEPTOR L3"/>
    <property type="match status" value="1"/>
</dbReference>
<dbReference type="PANTHER" id="PTHR12011">
    <property type="entry name" value="ADHESION G-PROTEIN COUPLED RECEPTOR"/>
    <property type="match status" value="1"/>
</dbReference>
<dbReference type="Pfam" id="PF00002">
    <property type="entry name" value="7tm_2"/>
    <property type="match status" value="1"/>
</dbReference>
<dbReference type="Pfam" id="PF16489">
    <property type="entry name" value="GAIN"/>
    <property type="match status" value="1"/>
</dbReference>
<dbReference type="Pfam" id="PF01825">
    <property type="entry name" value="GPS"/>
    <property type="match status" value="1"/>
</dbReference>
<dbReference type="Pfam" id="PF02793">
    <property type="entry name" value="HRM"/>
    <property type="match status" value="1"/>
</dbReference>
<dbReference type="Pfam" id="PF02354">
    <property type="entry name" value="Latrophilin"/>
    <property type="match status" value="2"/>
</dbReference>
<dbReference type="Pfam" id="PF02191">
    <property type="entry name" value="OLF"/>
    <property type="match status" value="1"/>
</dbReference>
<dbReference type="Pfam" id="PF02140">
    <property type="entry name" value="SUEL_Lectin"/>
    <property type="match status" value="1"/>
</dbReference>
<dbReference type="PRINTS" id="PR00249">
    <property type="entry name" value="GPCRSECRETIN"/>
</dbReference>
<dbReference type="PRINTS" id="PR01444">
    <property type="entry name" value="LATROPHILIN"/>
</dbReference>
<dbReference type="SMART" id="SM00303">
    <property type="entry name" value="GPS"/>
    <property type="match status" value="1"/>
</dbReference>
<dbReference type="SMART" id="SM00008">
    <property type="entry name" value="HormR"/>
    <property type="match status" value="1"/>
</dbReference>
<dbReference type="SMART" id="SM00284">
    <property type="entry name" value="OLF"/>
    <property type="match status" value="1"/>
</dbReference>
<dbReference type="SUPFAM" id="SSF81321">
    <property type="entry name" value="Family A G protein-coupled receptor-like"/>
    <property type="match status" value="1"/>
</dbReference>
<dbReference type="PROSITE" id="PS00650">
    <property type="entry name" value="G_PROTEIN_RECEP_F2_2"/>
    <property type="match status" value="1"/>
</dbReference>
<dbReference type="PROSITE" id="PS50227">
    <property type="entry name" value="G_PROTEIN_RECEP_F2_3"/>
    <property type="match status" value="1"/>
</dbReference>
<dbReference type="PROSITE" id="PS50261">
    <property type="entry name" value="G_PROTEIN_RECEP_F2_4"/>
    <property type="match status" value="1"/>
</dbReference>
<dbReference type="PROSITE" id="PS50221">
    <property type="entry name" value="GAIN_B"/>
    <property type="match status" value="1"/>
</dbReference>
<dbReference type="PROSITE" id="PS51132">
    <property type="entry name" value="OLF"/>
    <property type="match status" value="1"/>
</dbReference>
<dbReference type="PROSITE" id="PS50228">
    <property type="entry name" value="SUEL_LECTIN"/>
    <property type="match status" value="1"/>
</dbReference>
<feature type="signal peptide" evidence="3">
    <location>
        <begin position="1"/>
        <end position="19"/>
    </location>
</feature>
<feature type="chain" id="PRO_0000012913" description="Adhesion G protein-coupled receptor L3">
    <location>
        <begin position="20"/>
        <end position="1447"/>
    </location>
</feature>
<feature type="topological domain" description="Extracellular" evidence="10 17">
    <location>
        <begin position="20"/>
        <end position="862"/>
    </location>
</feature>
<feature type="transmembrane region" description="Helical; Name=1" evidence="10 17">
    <location>
        <begin position="863"/>
        <end position="888"/>
    </location>
</feature>
<feature type="topological domain" description="Cytoplasmic" evidence="10 17">
    <location>
        <begin position="889"/>
        <end position="896"/>
    </location>
</feature>
<feature type="transmembrane region" description="Helical; Name=2" evidence="10 17">
    <location>
        <begin position="897"/>
        <end position="918"/>
    </location>
</feature>
<feature type="topological domain" description="Extracellular" evidence="10 17">
    <location>
        <begin position="919"/>
        <end position="926"/>
    </location>
</feature>
<feature type="transmembrane region" description="Helical; Name=3" evidence="10 17">
    <location>
        <begin position="927"/>
        <end position="950"/>
    </location>
</feature>
<feature type="topological domain" description="Cytoplasmic" evidence="10 17">
    <location>
        <begin position="951"/>
        <end position="967"/>
    </location>
</feature>
<feature type="transmembrane region" description="Helical; Name=4" evidence="10 17">
    <location>
        <begin position="968"/>
        <end position="990"/>
    </location>
</feature>
<feature type="topological domain" description="Extracellular" evidence="10 17">
    <location>
        <begin position="991"/>
        <end position="1005"/>
    </location>
</feature>
<feature type="transmembrane region" description="Helical; Name=5" evidence="10 17">
    <location>
        <begin position="1006"/>
        <end position="1027"/>
    </location>
</feature>
<feature type="topological domain" description="Cytoplasmic" evidence="10 17">
    <location>
        <begin position="1028"/>
        <end position="1053"/>
    </location>
</feature>
<feature type="transmembrane region" description="Helical; Name=6" evidence="10 17">
    <location>
        <begin position="1054"/>
        <end position="1073"/>
    </location>
</feature>
<feature type="topological domain" description="Extracellular" evidence="10 17">
    <location>
        <begin position="1074"/>
        <end position="1078"/>
    </location>
</feature>
<feature type="transmembrane region" description="Helical; Name=7" evidence="10 17">
    <location>
        <begin position="1079"/>
        <end position="1104"/>
    </location>
</feature>
<feature type="topological domain" description="Cytoplasmic" evidence="10 17">
    <location>
        <begin position="1105"/>
        <end position="1447"/>
    </location>
</feature>
<feature type="domain" description="SUEL-type lectin" evidence="5">
    <location>
        <begin position="35"/>
        <end position="124"/>
    </location>
</feature>
<feature type="domain" description="Olfactomedin-like" evidence="6">
    <location>
        <begin position="134"/>
        <end position="393"/>
    </location>
</feature>
<feature type="domain" description="GAIN-B" evidence="4">
    <location>
        <begin position="675"/>
        <end position="854"/>
    </location>
</feature>
<feature type="region of interest" description="Interaction with FLRT3" evidence="9">
    <location>
        <begin position="249"/>
        <end position="279"/>
    </location>
</feature>
<feature type="region of interest" description="Disordered" evidence="7">
    <location>
        <begin position="426"/>
        <end position="473"/>
    </location>
</feature>
<feature type="region of interest" description="GPS" evidence="4">
    <location>
        <begin position="805"/>
        <end position="854"/>
    </location>
</feature>
<feature type="region of interest" description="Stachel" evidence="10">
    <location>
        <begin position="842"/>
        <end position="855"/>
    </location>
</feature>
<feature type="region of interest" description="Disordered" evidence="7">
    <location>
        <begin position="1123"/>
        <end position="1147"/>
    </location>
</feature>
<feature type="region of interest" description="Disordered" evidence="7">
    <location>
        <begin position="1423"/>
        <end position="1447"/>
    </location>
</feature>
<feature type="short sequence motif" description="PDZ-binding" evidence="1">
    <location>
        <begin position="1442"/>
        <end position="1447"/>
    </location>
</feature>
<feature type="compositionally biased region" description="Low complexity" evidence="7">
    <location>
        <begin position="428"/>
        <end position="458"/>
    </location>
</feature>
<feature type="binding site" evidence="9 16">
    <location>
        <position position="264"/>
    </location>
    <ligand>
        <name>Ca(2+)</name>
        <dbReference type="ChEBI" id="CHEBI:29108"/>
    </ligand>
</feature>
<feature type="binding site" evidence="9 16">
    <location>
        <position position="312"/>
    </location>
    <ligand>
        <name>Ca(2+)</name>
        <dbReference type="ChEBI" id="CHEBI:29108"/>
    </ligand>
</feature>
<feature type="binding site" evidence="9 16">
    <location>
        <position position="313"/>
    </location>
    <ligand>
        <name>Ca(2+)</name>
        <dbReference type="ChEBI" id="CHEBI:29108"/>
    </ligand>
</feature>
<feature type="binding site" evidence="9 16">
    <location>
        <position position="367"/>
    </location>
    <ligand>
        <name>Ca(2+)</name>
        <dbReference type="ChEBI" id="CHEBI:29108"/>
    </ligand>
</feature>
<feature type="site" description="Cleavage; by autolysis" evidence="4">
    <location>
        <begin position="841"/>
        <end position="842"/>
    </location>
</feature>
<feature type="modified residue" description="Phosphoserine" evidence="1">
    <location>
        <position position="1164"/>
    </location>
</feature>
<feature type="glycosylation site" description="N-linked (GlcNAc...) asparagine" evidence="3">
    <location>
        <position position="93"/>
    </location>
</feature>
<feature type="glycosylation site" description="N-linked (GlcNAc...) asparagine" evidence="3">
    <location>
        <position position="464"/>
    </location>
</feature>
<feature type="glycosylation site" description="N-linked (GlcNAc...) asparagine" evidence="3">
    <location>
        <position position="549"/>
    </location>
</feature>
<feature type="glycosylation site" description="N-linked (GlcNAc...) asparagine" evidence="3">
    <location>
        <position position="746"/>
    </location>
</feature>
<feature type="glycosylation site" description="N-linked (GlcNAc...) asparagine" evidence="3">
    <location>
        <position position="759"/>
    </location>
</feature>
<feature type="glycosylation site" description="N-linked (GlcNAc...) asparagine" evidence="3">
    <location>
        <position position="804"/>
    </location>
</feature>
<feature type="glycosylation site" description="N-linked (GlcNAc...) asparagine" evidence="3">
    <location>
        <position position="830"/>
    </location>
</feature>
<feature type="glycosylation site" description="N-linked (GlcNAc...) asparagine" evidence="3">
    <location>
        <position position="1076"/>
    </location>
</feature>
<feature type="disulfide bond" evidence="9 16">
    <location>
        <begin position="36"/>
        <end position="66"/>
    </location>
</feature>
<feature type="disulfide bond" evidence="9 16">
    <location>
        <begin position="45"/>
        <end position="123"/>
    </location>
</feature>
<feature type="disulfide bond" evidence="9 16">
    <location>
        <begin position="78"/>
        <end position="110"/>
    </location>
</feature>
<feature type="disulfide bond" evidence="9 16">
    <location>
        <begin position="91"/>
        <end position="97"/>
    </location>
</feature>
<feature type="disulfide bond" evidence="6 9 16">
    <location>
        <begin position="135"/>
        <end position="317"/>
    </location>
</feature>
<feature type="disulfide bond" evidence="4">
    <location>
        <begin position="805"/>
        <end position="836"/>
    </location>
</feature>
<feature type="disulfide bond" evidence="4">
    <location>
        <begin position="824"/>
        <end position="838"/>
    </location>
</feature>
<feature type="disulfide bond" evidence="10 17">
    <location>
        <begin position="927"/>
        <end position="999"/>
    </location>
</feature>
<feature type="splice variant" id="VSP_010235" description="In isoform 2 and isoform 4." evidence="13">
    <original>K</original>
    <variation>KLQKRERSCRAYVQ</variation>
    <location>
        <position position="623"/>
    </location>
</feature>
<feature type="splice variant" id="VSP_010236" description="In isoform 3." evidence="11">
    <original>ADNLLKTDIVRENTDNIKLEVARLSTEGNLEDLKFPENMG</original>
    <variation>VLQVCLPVREQSFLPFFSFFIFFFSFLPFIPLKFRLAKNK</variation>
    <location>
        <begin position="668"/>
        <end position="707"/>
    </location>
</feature>
<feature type="splice variant" id="VSP_010237" description="In isoform 3." evidence="11">
    <location>
        <begin position="708"/>
        <end position="1447"/>
    </location>
</feature>
<feature type="splice variant" id="VSP_010238" description="In isoform 2 and isoform 4." evidence="13">
    <original>I</original>
    <variation>INYEDNRPFI</variation>
    <location>
        <position position="1050"/>
    </location>
</feature>
<feature type="splice variant" id="VSP_010239" description="In isoform 2." evidence="13">
    <original>GLLNNARDTSVMDTLPLNGNHGNSYSIASGEYLSNC</original>
    <variation>PYRETSMGVKLNIAYQIGASEQCQGYKCHGYSTTEW</variation>
    <location>
        <begin position="1183"/>
        <end position="1218"/>
    </location>
</feature>
<feature type="splice variant" id="VSP_010240" description="In isoform 2." evidence="13">
    <location>
        <begin position="1219"/>
        <end position="1447"/>
    </location>
</feature>
<feature type="sequence variant" id="VAR_064477" evidence="8">
    <original>A</original>
    <variation>S</variation>
    <location>
        <position position="247"/>
    </location>
</feature>
<feature type="sequence variant" id="VAR_055934" description="In dbSNP:rs35106420." evidence="8">
    <original>R</original>
    <variation>Q</variation>
    <location>
        <position position="465"/>
    </location>
</feature>
<feature type="sequence variant" id="VAR_064478" evidence="8">
    <original>T</original>
    <variation>M</variation>
    <location>
        <position position="770"/>
    </location>
</feature>
<feature type="sequence variant" id="VAR_064479" evidence="8">
    <original>L</original>
    <variation>V</variation>
    <location>
        <position position="915"/>
    </location>
</feature>
<feature type="mutagenesis site" description="Strongly reduces FLRT3 binding. Abolishes FLRT3 binding; when associated with A-308." evidence="9">
    <original>YHDT</original>
    <variation>AHAA</variation>
    <location>
        <begin position="249"/>
        <end position="252"/>
    </location>
</feature>
<feature type="mutagenesis site" description="Abolishes FLRT3 binding; when associated with 249-A--A-252." evidence="9">
    <original>R</original>
    <variation>A</variation>
    <location>
        <position position="308"/>
    </location>
</feature>
<feature type="mutagenesis site" description="Strongly decreased G protein-coupled receptor activity." evidence="10">
    <original>F</original>
    <variation>A</variation>
    <location>
        <position position="844"/>
    </location>
</feature>
<feature type="mutagenesis site" description="Strongly decreased G protein-coupled receptor activity." evidence="10">
    <original>L</original>
    <variation>A</variation>
    <location>
        <position position="847"/>
    </location>
</feature>
<feature type="mutagenesis site" description="Strongly decreased G protein-coupled receptor activity." evidence="10">
    <original>F</original>
    <variation>A</variation>
    <location>
        <position position="914"/>
    </location>
</feature>
<feature type="mutagenesis site" description="Strongly decreased G protein-coupled receptor activity." evidence="10">
    <original>F</original>
    <variation>A</variation>
    <location>
        <position position="938"/>
    </location>
</feature>
<feature type="mutagenesis site" description="Strongly decreased G protein-coupled receptor activity." evidence="10">
    <original>W</original>
    <variation>A</variation>
    <location>
        <position position="1000"/>
    </location>
</feature>
<feature type="mutagenesis site" description="Strongly decreased G protein-coupled receptor activity." evidence="10">
    <original>W</original>
    <variation>A</variation>
    <location>
        <position position="1068"/>
    </location>
</feature>
<feature type="strand" evidence="20">
    <location>
        <begin position="31"/>
        <end position="36"/>
    </location>
</feature>
<feature type="strand" evidence="20">
    <location>
        <begin position="40"/>
        <end position="44"/>
    </location>
</feature>
<feature type="strand" evidence="18">
    <location>
        <begin position="46"/>
        <end position="48"/>
    </location>
</feature>
<feature type="strand" evidence="20">
    <location>
        <begin position="50"/>
        <end position="61"/>
    </location>
</feature>
<feature type="strand" evidence="18">
    <location>
        <begin position="63"/>
        <end position="66"/>
    </location>
</feature>
<feature type="helix" evidence="20">
    <location>
        <begin position="70"/>
        <end position="73"/>
    </location>
</feature>
<feature type="helix" evidence="20">
    <location>
        <begin position="83"/>
        <end position="91"/>
    </location>
</feature>
<feature type="strand" evidence="20">
    <location>
        <begin position="95"/>
        <end position="100"/>
    </location>
</feature>
<feature type="turn" evidence="20">
    <location>
        <begin position="103"/>
        <end position="105"/>
    </location>
</feature>
<feature type="strand" evidence="20">
    <location>
        <begin position="116"/>
        <end position="124"/>
    </location>
</feature>
<feature type="turn" evidence="19">
    <location>
        <begin position="845"/>
        <end position="848"/>
    </location>
</feature>
<feature type="helix" evidence="19">
    <location>
        <begin position="860"/>
        <end position="878"/>
    </location>
</feature>
<feature type="helix" evidence="19">
    <location>
        <begin position="881"/>
        <end position="888"/>
    </location>
</feature>
<feature type="strand" evidence="19">
    <location>
        <begin position="890"/>
        <end position="892"/>
    </location>
</feature>
<feature type="helix" evidence="19">
    <location>
        <begin position="897"/>
        <end position="916"/>
    </location>
</feature>
<feature type="strand" evidence="19">
    <location>
        <begin position="917"/>
        <end position="919"/>
    </location>
</feature>
<feature type="helix" evidence="19">
    <location>
        <begin position="924"/>
        <end position="956"/>
    </location>
</feature>
<feature type="helix" evidence="19">
    <location>
        <begin position="969"/>
        <end position="974"/>
    </location>
</feature>
<feature type="helix" evidence="19">
    <location>
        <begin position="977"/>
        <end position="988"/>
    </location>
</feature>
<feature type="strand" evidence="19">
    <location>
        <begin position="996"/>
        <end position="1000"/>
    </location>
</feature>
<feature type="turn" evidence="19">
    <location>
        <begin position="1003"/>
        <end position="1006"/>
    </location>
</feature>
<feature type="helix" evidence="19">
    <location>
        <begin position="1009"/>
        <end position="1037"/>
    </location>
</feature>
<feature type="helix" evidence="19">
    <location>
        <begin position="1049"/>
        <end position="1053"/>
    </location>
</feature>
<feature type="helix" evidence="19">
    <location>
        <begin position="1054"/>
        <end position="1057"/>
    </location>
</feature>
<feature type="helix" evidence="19">
    <location>
        <begin position="1060"/>
        <end position="1064"/>
    </location>
</feature>
<feature type="helix" evidence="19">
    <location>
        <begin position="1066"/>
        <end position="1072"/>
    </location>
</feature>
<feature type="strand" evidence="19">
    <location>
        <begin position="1076"/>
        <end position="1078"/>
    </location>
</feature>
<feature type="helix" evidence="19">
    <location>
        <begin position="1081"/>
        <end position="1089"/>
    </location>
</feature>
<feature type="turn" evidence="19">
    <location>
        <begin position="1090"/>
        <end position="1092"/>
    </location>
</feature>
<feature type="helix" evidence="19">
    <location>
        <begin position="1093"/>
        <end position="1101"/>
    </location>
</feature>
<feature type="helix" evidence="19">
    <location>
        <begin position="1106"/>
        <end position="1115"/>
    </location>
</feature>
<evidence type="ECO:0000250" key="1">
    <source>
        <dbReference type="UniProtKB" id="Q80TS3"/>
    </source>
</evidence>
<evidence type="ECO:0000250" key="2">
    <source>
        <dbReference type="UniProtKB" id="Q9Z173"/>
    </source>
</evidence>
<evidence type="ECO:0000255" key="3"/>
<evidence type="ECO:0000255" key="4">
    <source>
        <dbReference type="PROSITE-ProRule" id="PRU00098"/>
    </source>
</evidence>
<evidence type="ECO:0000255" key="5">
    <source>
        <dbReference type="PROSITE-ProRule" id="PRU00260"/>
    </source>
</evidence>
<evidence type="ECO:0000255" key="6">
    <source>
        <dbReference type="PROSITE-ProRule" id="PRU00446"/>
    </source>
</evidence>
<evidence type="ECO:0000256" key="7">
    <source>
        <dbReference type="SAM" id="MobiDB-lite"/>
    </source>
</evidence>
<evidence type="ECO:0000269" key="8">
    <source>
    </source>
</evidence>
<evidence type="ECO:0000269" key="9">
    <source>
    </source>
</evidence>
<evidence type="ECO:0000269" key="10">
    <source>
    </source>
</evidence>
<evidence type="ECO:0000303" key="11">
    <source>
    </source>
</evidence>
<evidence type="ECO:0000303" key="12">
    <source>
    </source>
</evidence>
<evidence type="ECO:0000303" key="13">
    <source ref="1"/>
</evidence>
<evidence type="ECO:0000305" key="14"/>
<evidence type="ECO:0000312" key="15">
    <source>
        <dbReference type="HGNC" id="HGNC:20974"/>
    </source>
</evidence>
<evidence type="ECO:0007744" key="16">
    <source>
        <dbReference type="PDB" id="5CMN"/>
    </source>
</evidence>
<evidence type="ECO:0007744" key="17">
    <source>
        <dbReference type="PDB" id="7SF7"/>
    </source>
</evidence>
<evidence type="ECO:0007829" key="18">
    <source>
        <dbReference type="PDB" id="6VHH"/>
    </source>
</evidence>
<evidence type="ECO:0007829" key="19">
    <source>
        <dbReference type="PDB" id="7SF7"/>
    </source>
</evidence>
<evidence type="ECO:0007829" key="20">
    <source>
        <dbReference type="PDB" id="8DJG"/>
    </source>
</evidence>
<proteinExistence type="evidence at protein level"/>
<protein>
    <recommendedName>
        <fullName evidence="12">Adhesion G protein-coupled receptor L3</fullName>
    </recommendedName>
    <alternativeName>
        <fullName evidence="2">Calcium-independent alpha-latrotoxin receptor 3</fullName>
        <shortName evidence="2">CIRL-3</shortName>
    </alternativeName>
    <alternativeName>
        <fullName evidence="12">Latrophilin-3</fullName>
    </alternativeName>
    <alternativeName>
        <fullName>Lectomedin-3</fullName>
    </alternativeName>
</protein>
<sequence>MWPSQLLIFMMLLAPIIHAFSRAPIPMAVVRRELSCESYPIELRCPGTDVIMIESANYGRTDDKICDSDPAQMENIRCYLPDAYKIMSQRCNNRTQCAVVAGPDVFPDPCPGTYKYLEVQYECVPYKVEQKVFLCPGLLKGVYQSEHLFESDHQSGAWCKDPLQASDKIYYMPWTPYRTDTLTEYSSKDDFIAGRPTTTYKLPHRVDGTGFVVYDGALFFNKERTRNIVKFDLRTRIKSGEAIIANANYHDTSPYRWGGKSDIDLAVDENGLWVIYATEQNNGKIVISQLNPYTLRIEGTWDTAYDKRSASNAFMICGILYVVKSVYEDDDNEATGNKIDYIYNTDQSKDSLVDVPFPNSYQYIAAVDYNPRDNLLYVWNNYHVVKYSLDFGPLDSRSGQAHHGQVSYISPPIHLDSELERPSVKDISTTGPLGMGSTTTSTTLRTTTLSPGRSTTPSVSGRRNRSTSTPSPAVEVLDDMTTHLPSASSQIPALEESCEAVEAREIMWFKTRQGQIAKQPCPAGTIGVSTYLCLAPDGIWDPQGPDLSNCSSPWVNHITQKLKSGETAANIARELAEQTRNHLNAGDITYSVRAMDQLVGLLDVQLRNLTPGGKDSAARSLNKAMVETVNNLLQPQALNAWRDLTTSDQLRAATMLLHTVEESAFVLADNLLKTDIVRENTDNIKLEVARLSTEGNLEDLKFPENMGHGSTIQLSANTLKQNGRNGEIRVAFVLYNNLGPYLSTENASMKLGTEALSTNHSVIVNSPVITAAINKEFSNKVYLADPVVFTVKHIKQSEENFNPNCSFWSYSKRTMTGYWSTQGCRLLTTNKTHTTCSCNHLTNFAVLMAHVEVKHSDAVHDLLLDVITWVGILLSLVCLLICIFTFCFFRGLQSDRNTIHKNLCISLFVAELLFLIGINRTDQPIACAVFAALLHFFFLAAFTWMFLEGVQLYIMLVEVFESEHSRRKYFYLVGYGMPALIVAVSAAVDYRSYGTDKVCWLRLDTYFIWSFIGPATLIIMLNVIFLGIALYKMFHHTAILKPESGCLDNIKSWVIGAIALLCLLGLTWAFGLMYINESTVIMAYLFTIFNSLQGMFIFIFHCVLQKKVRKEYGKCLRTHCCSGKSTESSIGSGKTSGSRTPGRYSTGSQSRIRRMWNDTVRKQSESSFITGDINSSASLNREGLLNNARDTSVMDTLPLNGNHGNSYSIASGEYLSNCVQIIDRGYNHNETALEKKILKELTSNYIPSYLNNHERSSEQNRNLMNKLVNNLGSGREDDAIVLDDATSFNHEESLGLELIHEESDAPLLPPRVYSTENHQPHHYTRRRIPQDHSESFFPLLTNEHTEDLQSPHRDSLYTSMPTLAGVAATESVTTSTQTEPPPAKCGDAEDVYYKSMPNLGSRNHVHQLHTYYQLGRGSSDGFIVPPNKDGTPPEGSSKGPAHLVTSL</sequence>
<comment type="function">
    <text evidence="1 9 10">Orphan adhesion G-protein coupled receptor (aGPCR), which mediates synapse specificity (PubMed:35418682). Ligand binding causes a conformation change that triggers signaling via guanine nucleotide-binding proteins (G proteins) and modulates the activity of downstream effectors (PubMed:35418682). ADGRL3 is coupled with different classes of G alpha proteins, such as G(12)/G(13), G(s), G(i) or G(q), depending on the context (PubMed:35418682). Coupling to G(12)/G(13) G proteins, which mediates the activation Rho small GTPases is the most efficient (PubMed:35418682). Following G-protein coupled receptor activation, associates with cell adhesion molecules that are expressed at the surface of adjacent cells to direct synapse specificity (PubMed:26235030). Specifically mediates the establishment of Schaffer-collateral synapses formed by CA3-region axons on CA1-region pyramidal neurons in the hippocampus (By similarity). Localizes to postsynaptic spines in excitatory synapses in the S.oriens and S.radiatum and interacts with presynaptic cell adhesion molecules FLRT3 and TENM2, promoting synapse formation (By similarity). Plays a role in the development of glutamatergic synapses in the cortex (By similarity). Important in determining the connectivity rates between the principal neurons in the cortex (By similarity).</text>
</comment>
<comment type="function">
    <molecule>Isoform 1</molecule>
    <text evidence="1">Orphan adhesion G-protein coupled receptor (aGPCR), which mediates synapse specificity. Ligand binding causes a conformation change that triggers signaling via guanine nucleotide-binding proteins (G proteins) and modulates the activity of downstream effectors, such as adenylate cyclase. Isoform 1 is specifically coupled to G(s) G proteins and mediates activation of adenylate cyclase activity. Following G-protein coupled receptor activation, undergoes liquid-liquid phase transition, associates with (1) cell adhesion molecules that are expressed at the surface of adjacent cells, as well as (2) PDZ-containing proteins, such as SHANK3 and DLG4, in the cytoplasm to direct synapse formation.</text>
</comment>
<comment type="activity regulation">
    <text evidence="10">Forms a heterodimer of 2 chains generated by proteolytic processing that remain associated through non-covalent interactions mediated by the GAIN-B domain (PubMed:35418682). In the inactivated receptor, the Stachel sequence (also named stalk) is embedded in the GAIN-B domain, where it adopts a beta-strand conformation (PubMed:35418682). On activation, the Stachel moves into the 7 transmembrane region and adopts a twisted hook-shaped configuration that forms contacts within the receptor, leading to coupling of a G-alpha protein, which activates signaling (PubMed:35418682). The cleaved GAIN-B and N-terminal domains can then dissociate from the rest of the receptor (PubMed:35418682).</text>
</comment>
<comment type="subunit">
    <text evidence="1 4 9">Heterodimer of 2 chains generated by proteolytic processing; the large extracellular N-terminal fragment and the membrane-bound C-terminal fragment predominantly remain associated and non-covalently linked (By similarity). Interacts (via olfactomedin-like domain) with FLRT1 (via extracellular domain) (By similarity). Interacts (via olfactomedin-like domain) with FLRT2 (via extracellular domain) (By similarity). Interacts (via olfactomedin-like domain) with FLRT3 (via extracellular domain); the interaction is direct (PubMed:26235030). Interacts (via extracellular domain) with TENM1 (By similarity). Interacts (via extracellular domain) with TENM2 (By similarity). Interacts (via extracellular domain) with TENM3 (By similarity). Identified in a complex with FLRT3 and UNC5B; does not interact with UNC5B by itself (PubMed:26235030). Identified in a complex with FLRT3 and UNC5D; does not interact with UNC5D by itself (PubMed:26235030).</text>
</comment>
<comment type="subunit">
    <molecule>Isoform 1</molecule>
    <text evidence="1">Interacts (via PDZ-binding motif) with SHANK3. Interacts (via PDZ-binding motif) with DLG4.</text>
</comment>
<comment type="interaction">
    <interactant intactId="EBI-2689295">
        <id>Q9HAR2</id>
    </interactant>
    <interactant intactId="EBI-1057092">
        <id>Q9NZU0</id>
        <label>FLRT3</label>
    </interactant>
    <organismsDiffer>false</organismsDiffer>
    <experiments>4</experiments>
</comment>
<comment type="subcellular location">
    <subcellularLocation>
        <location evidence="9">Cell membrane</location>
        <topology evidence="10">Multi-pass membrane protein</topology>
    </subcellularLocation>
    <subcellularLocation>
        <location evidence="1">Postsynaptic cell membrane</location>
        <topology evidence="3">Multi-pass membrane protein</topology>
    </subcellularLocation>
    <subcellularLocation>
        <location evidence="1">Cell projection</location>
        <location evidence="1">Axon</location>
    </subcellularLocation>
    <subcellularLocation>
        <location evidence="1">Cell junction</location>
    </subcellularLocation>
</comment>
<comment type="alternative products">
    <event type="alternative splicing"/>
    <isoform>
        <id>Q9HAR2-1</id>
        <name>1</name>
        <sequence type="displayed"/>
    </isoform>
    <isoform>
        <id>Q9HAR2-2</id>
        <name>2</name>
        <sequence type="described" ref="VSP_010235 VSP_010238 VSP_010239 VSP_010240"/>
    </isoform>
    <isoform>
        <id>Q9HAR2-3</id>
        <name>3</name>
        <sequence type="described" ref="VSP_010236 VSP_010237"/>
    </isoform>
    <isoform>
        <id>Q9HAR2-4</id>
        <name>4</name>
        <sequence type="described" ref="VSP_010235 VSP_010238"/>
    </isoform>
</comment>
<comment type="domain">
    <text evidence="10">The Stachel sequence (also named stalk) in the C-terminal part of the extracellular domain (ECD) functions as a tethered agonist (PubMed:35418682). In the inactivated receptor, the Stachel sequence (also named stalk) is embedded in the GAIN-B domain, where it adopts a beta-strand conformation (PubMed:35418682). On activation, the Stachel moves into the 7 transmembrane region and adopts a twisted hook-shaped configuration that forms contacts within the receptor, leading to coupling of a G-alpha protein, which activates signaling (PubMed:35418682).</text>
</comment>
<comment type="domain">
    <text evidence="1">The Olfactomedin-like domain is required for the synapse-promoting function and the interaction with FLRT3. The Olfactomedin-like and the SUEL-type lectin domains are required for the interaction with TENM1.</text>
</comment>
<comment type="PTM">
    <text evidence="4">Autoproteolytically processed at the GPS region of the GAIN-B domain; this cleavage modulates receptor activity.</text>
</comment>
<comment type="similarity">
    <text evidence="14">Belongs to the G-protein coupled receptor 2 family. LN-TM7 subfamily.</text>
</comment>
<comment type="sequence caution" evidence="14">
    <conflict type="erroneous initiation">
        <sequence resource="EMBL-CDS" id="BAA91375"/>
    </conflict>
    <text>Truncated N-terminus.</text>
</comment>
<accession>Q9HAR2</accession>
<accession>E9PE04</accession>
<accession>O94867</accession>
<accession>Q9NWK5</accession>
<gene>
    <name evidence="12 15" type="primary">ADGRL3</name>
    <name evidence="15" type="synonym">KIAA0768</name>
    <name evidence="15" type="synonym">LEC3</name>
    <name evidence="12" type="synonym">LPHN3</name>
</gene>
<name>AGRL3_HUMAN</name>